<accession>A8ALJ6</accession>
<keyword id="KW-0479">Metal-binding</keyword>
<keyword id="KW-1185">Reference proteome</keyword>
<keyword id="KW-0862">Zinc</keyword>
<feature type="chain" id="PRO_1000056969" description="DNA gyrase inhibitor YacG">
    <location>
        <begin position="1"/>
        <end position="64"/>
    </location>
</feature>
<feature type="region of interest" description="Disordered" evidence="2">
    <location>
        <begin position="45"/>
        <end position="64"/>
    </location>
</feature>
<feature type="compositionally biased region" description="Acidic residues" evidence="2">
    <location>
        <begin position="54"/>
        <end position="64"/>
    </location>
</feature>
<feature type="binding site" evidence="1">
    <location>
        <position position="9"/>
    </location>
    <ligand>
        <name>Zn(2+)</name>
        <dbReference type="ChEBI" id="CHEBI:29105"/>
    </ligand>
</feature>
<feature type="binding site" evidence="1">
    <location>
        <position position="12"/>
    </location>
    <ligand>
        <name>Zn(2+)</name>
        <dbReference type="ChEBI" id="CHEBI:29105"/>
    </ligand>
</feature>
<feature type="binding site" evidence="1">
    <location>
        <position position="28"/>
    </location>
    <ligand>
        <name>Zn(2+)</name>
        <dbReference type="ChEBI" id="CHEBI:29105"/>
    </ligand>
</feature>
<feature type="binding site" evidence="1">
    <location>
        <position position="32"/>
    </location>
    <ligand>
        <name>Zn(2+)</name>
        <dbReference type="ChEBI" id="CHEBI:29105"/>
    </ligand>
</feature>
<gene>
    <name evidence="1" type="primary">yacG</name>
    <name type="ordered locus">CKO_03275</name>
</gene>
<reference key="1">
    <citation type="submission" date="2007-08" db="EMBL/GenBank/DDBJ databases">
        <authorList>
            <consortium name="The Citrobacter koseri Genome Sequencing Project"/>
            <person name="McClelland M."/>
            <person name="Sanderson E.K."/>
            <person name="Porwollik S."/>
            <person name="Spieth J."/>
            <person name="Clifton W.S."/>
            <person name="Latreille P."/>
            <person name="Courtney L."/>
            <person name="Wang C."/>
            <person name="Pepin K."/>
            <person name="Bhonagiri V."/>
            <person name="Nash W."/>
            <person name="Johnson M."/>
            <person name="Thiruvilangam P."/>
            <person name="Wilson R."/>
        </authorList>
    </citation>
    <scope>NUCLEOTIDE SEQUENCE [LARGE SCALE GENOMIC DNA]</scope>
    <source>
        <strain>ATCC BAA-895 / CDC 4225-83 / SGSC4696</strain>
    </source>
</reference>
<evidence type="ECO:0000255" key="1">
    <source>
        <dbReference type="HAMAP-Rule" id="MF_00649"/>
    </source>
</evidence>
<evidence type="ECO:0000256" key="2">
    <source>
        <dbReference type="SAM" id="MobiDB-lite"/>
    </source>
</evidence>
<comment type="function">
    <text evidence="1">Inhibits all the catalytic activities of DNA gyrase by preventing its interaction with DNA. Acts by binding directly to the C-terminal domain of GyrB, which probably disrupts DNA binding by the gyrase.</text>
</comment>
<comment type="cofactor">
    <cofactor evidence="1">
        <name>Zn(2+)</name>
        <dbReference type="ChEBI" id="CHEBI:29105"/>
    </cofactor>
    <text evidence="1">Binds 1 zinc ion.</text>
</comment>
<comment type="subunit">
    <text evidence="1">Interacts with GyrB.</text>
</comment>
<comment type="similarity">
    <text evidence="1">Belongs to the DNA gyrase inhibitor YacG family.</text>
</comment>
<sequence length="64" mass="7195">MSETITVNCPTCGKTVVWGEVSPFRPFCSKRCQLIDLGEWAAEEKRIPSSGDLSESDDWSEEQK</sequence>
<dbReference type="EMBL" id="CP000822">
    <property type="protein sequence ID" value="ABV14359.1"/>
    <property type="molecule type" value="Genomic_DNA"/>
</dbReference>
<dbReference type="RefSeq" id="WP_012134064.1">
    <property type="nucleotide sequence ID" value="NC_009792.1"/>
</dbReference>
<dbReference type="SMR" id="A8ALJ6"/>
<dbReference type="STRING" id="290338.CKO_03275"/>
<dbReference type="GeneID" id="45137048"/>
<dbReference type="KEGG" id="cko:CKO_03275"/>
<dbReference type="HOGENOM" id="CLU_178280_3_1_6"/>
<dbReference type="OrthoDB" id="9809663at2"/>
<dbReference type="Proteomes" id="UP000008148">
    <property type="component" value="Chromosome"/>
</dbReference>
<dbReference type="GO" id="GO:0008657">
    <property type="term" value="F:DNA topoisomerase type II (double strand cut, ATP-hydrolyzing) inhibitor activity"/>
    <property type="evidence" value="ECO:0007669"/>
    <property type="project" value="UniProtKB-UniRule"/>
</dbReference>
<dbReference type="GO" id="GO:0008270">
    <property type="term" value="F:zinc ion binding"/>
    <property type="evidence" value="ECO:0007669"/>
    <property type="project" value="UniProtKB-UniRule"/>
</dbReference>
<dbReference type="GO" id="GO:0006355">
    <property type="term" value="P:regulation of DNA-templated transcription"/>
    <property type="evidence" value="ECO:0007669"/>
    <property type="project" value="InterPro"/>
</dbReference>
<dbReference type="FunFam" id="3.30.50.10:FF:000026">
    <property type="entry name" value="DNA gyrase inhibitor YacG"/>
    <property type="match status" value="1"/>
</dbReference>
<dbReference type="Gene3D" id="3.30.50.10">
    <property type="entry name" value="Erythroid Transcription Factor GATA-1, subunit A"/>
    <property type="match status" value="1"/>
</dbReference>
<dbReference type="HAMAP" id="MF_00649">
    <property type="entry name" value="DNA_gyrase_inhibitor_YacG"/>
    <property type="match status" value="1"/>
</dbReference>
<dbReference type="InterPro" id="IPR005584">
    <property type="entry name" value="DNA_gyrase_inhibitor_YacG"/>
</dbReference>
<dbReference type="InterPro" id="IPR013088">
    <property type="entry name" value="Znf_NHR/GATA"/>
</dbReference>
<dbReference type="NCBIfam" id="NF001638">
    <property type="entry name" value="PRK00418.1"/>
    <property type="match status" value="1"/>
</dbReference>
<dbReference type="PANTHER" id="PTHR36150">
    <property type="entry name" value="DNA GYRASE INHIBITOR YACG"/>
    <property type="match status" value="1"/>
</dbReference>
<dbReference type="PANTHER" id="PTHR36150:SF1">
    <property type="entry name" value="DNA GYRASE INHIBITOR YACG"/>
    <property type="match status" value="1"/>
</dbReference>
<dbReference type="Pfam" id="PF03884">
    <property type="entry name" value="YacG"/>
    <property type="match status" value="1"/>
</dbReference>
<dbReference type="SUPFAM" id="SSF57716">
    <property type="entry name" value="Glucocorticoid receptor-like (DNA-binding domain)"/>
    <property type="match status" value="1"/>
</dbReference>
<protein>
    <recommendedName>
        <fullName evidence="1">DNA gyrase inhibitor YacG</fullName>
    </recommendedName>
</protein>
<proteinExistence type="inferred from homology"/>
<name>YACG_CITK8</name>
<organism>
    <name type="scientific">Citrobacter koseri (strain ATCC BAA-895 / CDC 4225-83 / SGSC4696)</name>
    <dbReference type="NCBI Taxonomy" id="290338"/>
    <lineage>
        <taxon>Bacteria</taxon>
        <taxon>Pseudomonadati</taxon>
        <taxon>Pseudomonadota</taxon>
        <taxon>Gammaproteobacteria</taxon>
        <taxon>Enterobacterales</taxon>
        <taxon>Enterobacteriaceae</taxon>
        <taxon>Citrobacter</taxon>
    </lineage>
</organism>